<geneLocation type="chloroplast"/>
<feature type="chain" id="PRO_0000217542" description="Magnesium-protoporphyrin IX monomethyl ester [oxidative] cyclase">
    <location>
        <begin position="1"/>
        <end position="335"/>
    </location>
</feature>
<reference key="1">
    <citation type="journal article" date="2003" name="DNA Res.">
        <title>Complete sequence and analysis of the plastid genome of the unicellular red alga Cyanidioschyzon merolae.</title>
        <authorList>
            <person name="Ohta N."/>
            <person name="Matsuzaki M."/>
            <person name="Misumi O."/>
            <person name="Miyagishima S.-Y."/>
            <person name="Nozaki H."/>
            <person name="Tanaka K."/>
            <person name="Shin-i T."/>
            <person name="Kohara Y."/>
            <person name="Kuroiwa T."/>
        </authorList>
    </citation>
    <scope>NUCLEOTIDE SEQUENCE [LARGE SCALE GENOMIC DNA]</scope>
    <source>
        <strain>NIES-3377 / 10D</strain>
    </source>
</reference>
<accession>Q85FX6</accession>
<keyword id="KW-0149">Chlorophyll biosynthesis</keyword>
<keyword id="KW-0150">Chloroplast</keyword>
<keyword id="KW-0408">Iron</keyword>
<keyword id="KW-0479">Metal-binding</keyword>
<keyword id="KW-0521">NADP</keyword>
<keyword id="KW-0560">Oxidoreductase</keyword>
<keyword id="KW-0602">Photosynthesis</keyword>
<keyword id="KW-0934">Plastid</keyword>
<keyword id="KW-1185">Reference proteome</keyword>
<organism>
    <name type="scientific">Cyanidioschyzon merolae (strain NIES-3377 / 10D)</name>
    <name type="common">Unicellular red alga</name>
    <dbReference type="NCBI Taxonomy" id="280699"/>
    <lineage>
        <taxon>Eukaryota</taxon>
        <taxon>Rhodophyta</taxon>
        <taxon>Bangiophyceae</taxon>
        <taxon>Cyanidiales</taxon>
        <taxon>Cyanidiaceae</taxon>
        <taxon>Cyanidioschyzon</taxon>
    </lineage>
</organism>
<name>ACSF_CYAM1</name>
<proteinExistence type="inferred from homology"/>
<dbReference type="EC" id="1.14.13.81" evidence="1"/>
<dbReference type="EMBL" id="AB002583">
    <property type="protein sequence ID" value="BAC76217.1"/>
    <property type="molecule type" value="Genomic_DNA"/>
</dbReference>
<dbReference type="RefSeq" id="NP_849055.1">
    <property type="nucleotide sequence ID" value="NC_004799.1"/>
</dbReference>
<dbReference type="SMR" id="Q85FX6"/>
<dbReference type="STRING" id="280699.Q85FX6"/>
<dbReference type="EnsemblPlants" id="CMV149CT">
    <property type="protein sequence ID" value="CMV149CT"/>
    <property type="gene ID" value="CMV149C"/>
</dbReference>
<dbReference type="GeneID" id="845087"/>
<dbReference type="Gramene" id="CMV149CT">
    <property type="protein sequence ID" value="CMV149CT"/>
    <property type="gene ID" value="CMV149C"/>
</dbReference>
<dbReference type="KEGG" id="cme:CymeCp123"/>
<dbReference type="eggNOG" id="ENOG502QRIH">
    <property type="taxonomic scope" value="Eukaryota"/>
</dbReference>
<dbReference type="HOGENOM" id="CLU_048037_0_0_1"/>
<dbReference type="UniPathway" id="UPA00670"/>
<dbReference type="Proteomes" id="UP000007014">
    <property type="component" value="Chloroplast"/>
</dbReference>
<dbReference type="GO" id="GO:0009706">
    <property type="term" value="C:chloroplast inner membrane"/>
    <property type="evidence" value="ECO:0007669"/>
    <property type="project" value="EnsemblPlants"/>
</dbReference>
<dbReference type="GO" id="GO:0009535">
    <property type="term" value="C:chloroplast thylakoid membrane"/>
    <property type="evidence" value="ECO:0007669"/>
    <property type="project" value="EnsemblPlants"/>
</dbReference>
<dbReference type="GO" id="GO:0005506">
    <property type="term" value="F:iron ion binding"/>
    <property type="evidence" value="ECO:0007669"/>
    <property type="project" value="UniProtKB-UniRule"/>
</dbReference>
<dbReference type="GO" id="GO:0048529">
    <property type="term" value="F:magnesium-protoporphyrin IX monomethyl ester (oxidative) cyclase activity"/>
    <property type="evidence" value="ECO:0007669"/>
    <property type="project" value="UniProtKB-UniRule"/>
</dbReference>
<dbReference type="GO" id="GO:0003729">
    <property type="term" value="F:mRNA binding"/>
    <property type="evidence" value="ECO:0007669"/>
    <property type="project" value="EnsemblPlants"/>
</dbReference>
<dbReference type="GO" id="GO:0009658">
    <property type="term" value="P:chloroplast organization"/>
    <property type="evidence" value="ECO:0007669"/>
    <property type="project" value="EnsemblPlants"/>
</dbReference>
<dbReference type="GO" id="GO:0036068">
    <property type="term" value="P:light-independent chlorophyll biosynthetic process"/>
    <property type="evidence" value="ECO:0007669"/>
    <property type="project" value="UniProtKB-UniRule"/>
</dbReference>
<dbReference type="GO" id="GO:0015979">
    <property type="term" value="P:photosynthesis"/>
    <property type="evidence" value="ECO:0007669"/>
    <property type="project" value="UniProtKB-UniRule"/>
</dbReference>
<dbReference type="GO" id="GO:1901401">
    <property type="term" value="P:regulation of tetrapyrrole metabolic process"/>
    <property type="evidence" value="ECO:0007669"/>
    <property type="project" value="EnsemblPlants"/>
</dbReference>
<dbReference type="CDD" id="cd01047">
    <property type="entry name" value="ACSF"/>
    <property type="match status" value="1"/>
</dbReference>
<dbReference type="HAMAP" id="MF_01840">
    <property type="entry name" value="AcsF"/>
    <property type="match status" value="1"/>
</dbReference>
<dbReference type="InterPro" id="IPR008434">
    <property type="entry name" value="AcsF"/>
</dbReference>
<dbReference type="InterPro" id="IPR009078">
    <property type="entry name" value="Ferritin-like_SF"/>
</dbReference>
<dbReference type="InterPro" id="IPR003251">
    <property type="entry name" value="Rr_diiron-bd_dom"/>
</dbReference>
<dbReference type="NCBIfam" id="TIGR02029">
    <property type="entry name" value="AcsF"/>
    <property type="match status" value="1"/>
</dbReference>
<dbReference type="NCBIfam" id="NF010172">
    <property type="entry name" value="PRK13654.1"/>
    <property type="match status" value="1"/>
</dbReference>
<dbReference type="PANTHER" id="PTHR31053">
    <property type="entry name" value="MAGNESIUM-PROTOPORPHYRIN IX MONOMETHYL ESTER [OXIDATIVE] CYCLASE, CHLOROPLASTIC"/>
    <property type="match status" value="1"/>
</dbReference>
<dbReference type="PANTHER" id="PTHR31053:SF2">
    <property type="entry name" value="MAGNESIUM-PROTOPORPHYRIN IX MONOMETHYL ESTER [OXIDATIVE] CYCLASE, CHLOROPLASTIC"/>
    <property type="match status" value="1"/>
</dbReference>
<dbReference type="Pfam" id="PF02915">
    <property type="entry name" value="Rubrerythrin"/>
    <property type="match status" value="1"/>
</dbReference>
<dbReference type="SUPFAM" id="SSF47240">
    <property type="entry name" value="Ferritin-like"/>
    <property type="match status" value="1"/>
</dbReference>
<protein>
    <recommendedName>
        <fullName evidence="1">Magnesium-protoporphyrin IX monomethyl ester [oxidative] cyclase</fullName>
        <shortName evidence="1">Mg-protoporphyrin IX monomethyl ester oxidative cyclase</shortName>
        <ecNumber evidence="1">1.14.13.81</ecNumber>
    </recommendedName>
</protein>
<gene>
    <name evidence="1" type="primary">acsF</name>
    <name type="synonym">ycf59</name>
</gene>
<sequence length="335" mass="40024">MQTAVQTQTTVQTLLTPRFYTTDFDQMAKYDISKNRAEIEAIVNEFRKDYNQTHFIRDDEFDQVWTQMPESKRQWFKEFLERSCTAEFSGFLLYKELSRRLKDTNPLLAEGFGYMSRDEARHAGFLNKAMADFGVSLDLGFLTKHRQYTFFAPKFIFYATYLSEKIGYWRYITIYRHLEAHPKWSVYPIFKFFEKWCQDENRHGDFFAAILKAQPKWITGWASRLWCRFFLLSVFVTMYLNDLQRKDFYQLIGLDARAFDWHVIRKTNESAARLFPVVLDVDHVDFVRLMDECACAYAHWRETQSVLSLAKIFACLFKLYVIKPINTQALWNTIK</sequence>
<evidence type="ECO:0000255" key="1">
    <source>
        <dbReference type="HAMAP-Rule" id="MF_01840"/>
    </source>
</evidence>
<comment type="function">
    <text evidence="1">Catalyzes the formation of the isocyclic ring in chlorophyll biosynthesis. Mediates the cyclase reaction, which results in the formation of divinylprotochlorophyllide (Pchlide) characteristic of all chlorophylls from magnesium-protoporphyrin IX 13-monomethyl ester (MgPMME).</text>
</comment>
<comment type="catalytic activity">
    <reaction evidence="1">
        <text>Mg-protoporphyrin IX 13-monomethyl ester + 3 NADPH + 3 O2 + 2 H(+) = 3,8-divinyl protochlorophyllide a + 3 NADP(+) + 5 H2O</text>
        <dbReference type="Rhea" id="RHEA:33235"/>
        <dbReference type="ChEBI" id="CHEBI:15377"/>
        <dbReference type="ChEBI" id="CHEBI:15378"/>
        <dbReference type="ChEBI" id="CHEBI:15379"/>
        <dbReference type="ChEBI" id="CHEBI:57783"/>
        <dbReference type="ChEBI" id="CHEBI:58349"/>
        <dbReference type="ChEBI" id="CHEBI:58632"/>
        <dbReference type="ChEBI" id="CHEBI:60491"/>
        <dbReference type="EC" id="1.14.13.81"/>
    </reaction>
</comment>
<comment type="cofactor">
    <cofactor evidence="1">
        <name>Fe cation</name>
        <dbReference type="ChEBI" id="CHEBI:24875"/>
    </cofactor>
</comment>
<comment type="pathway">
    <text evidence="1">Porphyrin-containing compound metabolism; chlorophyll biosynthesis (light-independent).</text>
</comment>
<comment type="subcellular location">
    <subcellularLocation>
        <location>Plastid</location>
        <location>Chloroplast</location>
    </subcellularLocation>
</comment>
<comment type="similarity">
    <text evidence="1">Belongs to the AcsF family.</text>
</comment>